<sequence>MVEHYHSTYYYEIAINIPLNKLFFYKFNLNLEIGIRVMVNFNGSNKIGIIIKKYFENEFKEKFEFKIKEIIKIIDTTKIITEHNIDLAHWISKKTFSGFGETLFFGLPQNSKAKKNQTLPSINEHPDHKKCLELNNEQQNIYKEIIGSEKTNVFYLFGIPGSGKTEIFIKLCEYYLALEQQVLFLIPEISLGYQIIKRIKYALNMHHKIYEYNSKVPNSDKNLIWNKVKNGESLVVIGIKSVLMLPFTKLKLIIMDEEHETTYKSENIPRFHSRHISFFLQKKFNAKFVMGSATPSLEAYHAMKNNQIKKIIMQNKFSQSKIEDIKIINMKKEPSTISSELLYSIQKSLNEKRQSLIFINKRGYLKNLECNECGHIICCPNCSFGLIYHKKENKLLCHYCSYKTKTASHCPQCESKDIKYKTYGIQLVEKELKKFLPNAKIARIDSDITKIENIDSINKFENKEIDILIGTQIIAKGFNFENIKTLGIINADIGMGLPDFRSGERIFTTLSQIMGRAARFKDDNIIIIQTKNPNYYAIKYAYKNQYEQFYEEELDIRKKLNYPPFNKIIRIIFRSKNEESAKQKCWEFFEKSKEFLQEEIEHLGPSEAIMKKISKNYRYNIIYLSKSYSLLEKLVNKTKEKVKMTSTVYIEIDYYPISLI</sequence>
<reference key="1">
    <citation type="journal article" date="1997" name="FEMS Microbiol. Lett.">
        <title>Borrelia burgdorferi uridine kinase: an enzyme of the pyrimidine salvage pathway for endogenous use of nucleotides.</title>
        <authorList>
            <person name="Boursaux-Eude C."/>
            <person name="Margarita D."/>
            <person name="Gilles A.M."/>
            <person name="Barzu O."/>
            <person name="Saint-Girons I."/>
        </authorList>
    </citation>
    <scope>NUCLEOTIDE SEQUENCE [GENOMIC DNA]</scope>
    <source>
        <strain>HB19</strain>
    </source>
</reference>
<reference key="2">
    <citation type="journal article" date="1997" name="Nature">
        <title>Genomic sequence of a Lyme disease spirochaete, Borrelia burgdorferi.</title>
        <authorList>
            <person name="Fraser C.M."/>
            <person name="Casjens S."/>
            <person name="Huang W.M."/>
            <person name="Sutton G.G."/>
            <person name="Clayton R.A."/>
            <person name="Lathigra R."/>
            <person name="White O."/>
            <person name="Ketchum K.A."/>
            <person name="Dodson R.J."/>
            <person name="Hickey E.K."/>
            <person name="Gwinn M.L."/>
            <person name="Dougherty B.A."/>
            <person name="Tomb J.-F."/>
            <person name="Fleischmann R.D."/>
            <person name="Richardson D.L."/>
            <person name="Peterson J.D."/>
            <person name="Kerlavage A.R."/>
            <person name="Quackenbush J."/>
            <person name="Salzberg S.L."/>
            <person name="Hanson M."/>
            <person name="van Vugt R."/>
            <person name="Palmer N."/>
            <person name="Adams M.D."/>
            <person name="Gocayne J.D."/>
            <person name="Weidman J.F."/>
            <person name="Utterback T.R."/>
            <person name="Watthey L."/>
            <person name="McDonald L.A."/>
            <person name="Artiach P."/>
            <person name="Bowman C."/>
            <person name="Garland S.A."/>
            <person name="Fujii C."/>
            <person name="Cotton M.D."/>
            <person name="Horst K."/>
            <person name="Roberts K.M."/>
            <person name="Hatch B."/>
            <person name="Smith H.O."/>
            <person name="Venter J.C."/>
        </authorList>
    </citation>
    <scope>NUCLEOTIDE SEQUENCE [LARGE SCALE GENOMIC DNA]</scope>
    <source>
        <strain>ATCC 35210 / DSM 4680 / CIP 102532 / B31</strain>
    </source>
</reference>
<organism>
    <name type="scientific">Borreliella burgdorferi (strain ATCC 35210 / DSM 4680 / CIP 102532 / B31)</name>
    <name type="common">Borrelia burgdorferi</name>
    <dbReference type="NCBI Taxonomy" id="224326"/>
    <lineage>
        <taxon>Bacteria</taxon>
        <taxon>Pseudomonadati</taxon>
        <taxon>Spirochaetota</taxon>
        <taxon>Spirochaetia</taxon>
        <taxon>Spirochaetales</taxon>
        <taxon>Borreliaceae</taxon>
        <taxon>Borreliella</taxon>
    </lineage>
</organism>
<proteinExistence type="inferred from homology"/>
<gene>
    <name evidence="1" type="primary">priA</name>
    <name type="ordered locus">BB_0014</name>
</gene>
<accession>Q45032</accession>
<accession>O51047</accession>
<keyword id="KW-0067">ATP-binding</keyword>
<keyword id="KW-0235">DNA replication</keyword>
<keyword id="KW-0238">DNA-binding</keyword>
<keyword id="KW-0347">Helicase</keyword>
<keyword id="KW-0378">Hydrolase</keyword>
<keyword id="KW-0413">Isomerase</keyword>
<keyword id="KW-0479">Metal-binding</keyword>
<keyword id="KW-0547">Nucleotide-binding</keyword>
<keyword id="KW-0639">Primosome</keyword>
<keyword id="KW-1185">Reference proteome</keyword>
<keyword id="KW-0862">Zinc</keyword>
<name>PRIA_BORBU</name>
<protein>
    <recommendedName>
        <fullName evidence="1">Replication restart protein PriA</fullName>
    </recommendedName>
    <alternativeName>
        <fullName evidence="1">ATP-dependent DNA helicase PriA</fullName>
        <ecNumber evidence="1">5.6.2.4</ecNumber>
    </alternativeName>
    <alternativeName>
        <fullName evidence="1">DNA 3'-5' helicase PriA</fullName>
    </alternativeName>
</protein>
<evidence type="ECO:0000255" key="1">
    <source>
        <dbReference type="HAMAP-Rule" id="MF_00983"/>
    </source>
</evidence>
<evidence type="ECO:0000305" key="2"/>
<feature type="chain" id="PRO_0000102117" description="Replication restart protein PriA">
    <location>
        <begin position="1"/>
        <end position="660"/>
    </location>
</feature>
<feature type="domain" description="Helicase ATP-binding" evidence="1">
    <location>
        <begin position="145"/>
        <end position="313"/>
    </location>
</feature>
<feature type="domain" description="Helicase C-terminal" evidence="1">
    <location>
        <begin position="405"/>
        <end position="557"/>
    </location>
</feature>
<feature type="short sequence motif" description="DEAH box" evidence="1">
    <location>
        <begin position="256"/>
        <end position="259"/>
    </location>
</feature>
<feature type="binding site" evidence="1">
    <location>
        <begin position="158"/>
        <end position="165"/>
    </location>
    <ligand>
        <name>ATP</name>
        <dbReference type="ChEBI" id="CHEBI:30616"/>
    </ligand>
</feature>
<feature type="binding site" evidence="1">
    <location>
        <position position="370"/>
    </location>
    <ligand>
        <name>Zn(2+)</name>
        <dbReference type="ChEBI" id="CHEBI:29105"/>
        <label>1</label>
    </ligand>
</feature>
<feature type="binding site" evidence="1">
    <location>
        <position position="373"/>
    </location>
    <ligand>
        <name>Zn(2+)</name>
        <dbReference type="ChEBI" id="CHEBI:29105"/>
        <label>1</label>
    </ligand>
</feature>
<feature type="binding site" evidence="1">
    <location>
        <position position="379"/>
    </location>
    <ligand>
        <name>Zn(2+)</name>
        <dbReference type="ChEBI" id="CHEBI:29105"/>
        <label>2</label>
    </ligand>
</feature>
<feature type="binding site" evidence="1">
    <location>
        <position position="382"/>
    </location>
    <ligand>
        <name>Zn(2+)</name>
        <dbReference type="ChEBI" id="CHEBI:29105"/>
        <label>2</label>
    </ligand>
</feature>
<feature type="binding site" evidence="1">
    <location>
        <position position="397"/>
    </location>
    <ligand>
        <name>Zn(2+)</name>
        <dbReference type="ChEBI" id="CHEBI:29105"/>
        <label>2</label>
    </ligand>
</feature>
<feature type="binding site" evidence="1">
    <location>
        <position position="400"/>
    </location>
    <ligand>
        <name>Zn(2+)</name>
        <dbReference type="ChEBI" id="CHEBI:29105"/>
        <label>2</label>
    </ligand>
</feature>
<feature type="binding site" evidence="1">
    <location>
        <position position="410"/>
    </location>
    <ligand>
        <name>Zn(2+)</name>
        <dbReference type="ChEBI" id="CHEBI:29105"/>
        <label>1</label>
    </ligand>
</feature>
<feature type="binding site" evidence="1">
    <location>
        <position position="413"/>
    </location>
    <ligand>
        <name>Zn(2+)</name>
        <dbReference type="ChEBI" id="CHEBI:29105"/>
        <label>1</label>
    </ligand>
</feature>
<feature type="sequence conflict" description="In Ref. 1; CAA66080." evidence="2" ref="1">
    <original>P</original>
    <variation>L</variation>
    <location>
        <position position="126"/>
    </location>
</feature>
<feature type="sequence conflict" description="In Ref. 1; CAA66080." evidence="2" ref="1">
    <original>D</original>
    <variation>N</variation>
    <location>
        <position position="555"/>
    </location>
</feature>
<comment type="function">
    <text evidence="1">Initiates the restart of stalled replication forks, which reloads the replicative helicase on sites other than the origin of replication. Recognizes and binds to abandoned replication forks and remodels them to uncover a helicase loading site. Promotes assembly of the primosome at these replication forks.</text>
</comment>
<comment type="catalytic activity">
    <reaction evidence="1">
        <text>Couples ATP hydrolysis with the unwinding of duplex DNA by translocating in the 3'-5' direction.</text>
        <dbReference type="EC" id="5.6.2.4"/>
    </reaction>
</comment>
<comment type="catalytic activity">
    <reaction evidence="1">
        <text>ATP + H2O = ADP + phosphate + H(+)</text>
        <dbReference type="Rhea" id="RHEA:13065"/>
        <dbReference type="ChEBI" id="CHEBI:15377"/>
        <dbReference type="ChEBI" id="CHEBI:15378"/>
        <dbReference type="ChEBI" id="CHEBI:30616"/>
        <dbReference type="ChEBI" id="CHEBI:43474"/>
        <dbReference type="ChEBI" id="CHEBI:456216"/>
        <dbReference type="EC" id="5.6.2.4"/>
    </reaction>
</comment>
<comment type="cofactor">
    <cofactor evidence="1">
        <name>Zn(2+)</name>
        <dbReference type="ChEBI" id="CHEBI:29105"/>
    </cofactor>
    <text evidence="1">Binds 2 zinc ions per subunit.</text>
</comment>
<comment type="subunit">
    <text evidence="1">Component of the replication restart primosome.</text>
</comment>
<comment type="similarity">
    <text evidence="1">Belongs to the helicase family. PriA subfamily.</text>
</comment>
<dbReference type="EC" id="5.6.2.4" evidence="1"/>
<dbReference type="EMBL" id="X97449">
    <property type="protein sequence ID" value="CAA66080.1"/>
    <property type="molecule type" value="Genomic_DNA"/>
</dbReference>
<dbReference type="EMBL" id="AE000783">
    <property type="protein sequence ID" value="AAC66393.1"/>
    <property type="molecule type" value="Genomic_DNA"/>
</dbReference>
<dbReference type="PIR" id="F70101">
    <property type="entry name" value="F70101"/>
</dbReference>
<dbReference type="RefSeq" id="NP_212148.1">
    <property type="nucleotide sequence ID" value="NC_001318.1"/>
</dbReference>
<dbReference type="RefSeq" id="WP_002659035.1">
    <property type="nucleotide sequence ID" value="NC_001318.1"/>
</dbReference>
<dbReference type="SMR" id="Q45032"/>
<dbReference type="STRING" id="224326.BB_0014"/>
<dbReference type="PaxDb" id="224326-BB_0014"/>
<dbReference type="EnsemblBacteria" id="AAC66393">
    <property type="protein sequence ID" value="AAC66393"/>
    <property type="gene ID" value="BB_0014"/>
</dbReference>
<dbReference type="KEGG" id="bbu:BB_0014"/>
<dbReference type="PATRIC" id="fig|224326.49.peg.412"/>
<dbReference type="HOGENOM" id="CLU_013353_4_1_12"/>
<dbReference type="OrthoDB" id="9759544at2"/>
<dbReference type="Proteomes" id="UP000001807">
    <property type="component" value="Chromosome"/>
</dbReference>
<dbReference type="GO" id="GO:1990077">
    <property type="term" value="C:primosome complex"/>
    <property type="evidence" value="ECO:0007669"/>
    <property type="project" value="UniProtKB-UniRule"/>
</dbReference>
<dbReference type="GO" id="GO:0043138">
    <property type="term" value="F:3'-5' DNA helicase activity"/>
    <property type="evidence" value="ECO:0007669"/>
    <property type="project" value="TreeGrafter"/>
</dbReference>
<dbReference type="GO" id="GO:0005524">
    <property type="term" value="F:ATP binding"/>
    <property type="evidence" value="ECO:0007669"/>
    <property type="project" value="UniProtKB-UniRule"/>
</dbReference>
<dbReference type="GO" id="GO:0016887">
    <property type="term" value="F:ATP hydrolysis activity"/>
    <property type="evidence" value="ECO:0007669"/>
    <property type="project" value="RHEA"/>
</dbReference>
<dbReference type="GO" id="GO:0003677">
    <property type="term" value="F:DNA binding"/>
    <property type="evidence" value="ECO:0007669"/>
    <property type="project" value="UniProtKB-UniRule"/>
</dbReference>
<dbReference type="GO" id="GO:0008270">
    <property type="term" value="F:zinc ion binding"/>
    <property type="evidence" value="ECO:0007669"/>
    <property type="project" value="UniProtKB-UniRule"/>
</dbReference>
<dbReference type="GO" id="GO:0006310">
    <property type="term" value="P:DNA recombination"/>
    <property type="evidence" value="ECO:0007669"/>
    <property type="project" value="InterPro"/>
</dbReference>
<dbReference type="GO" id="GO:0006270">
    <property type="term" value="P:DNA replication initiation"/>
    <property type="evidence" value="ECO:0007669"/>
    <property type="project" value="TreeGrafter"/>
</dbReference>
<dbReference type="GO" id="GO:0006269">
    <property type="term" value="P:DNA replication, synthesis of primer"/>
    <property type="evidence" value="ECO:0007669"/>
    <property type="project" value="UniProtKB-KW"/>
</dbReference>
<dbReference type="GO" id="GO:0006302">
    <property type="term" value="P:double-strand break repair"/>
    <property type="evidence" value="ECO:0007669"/>
    <property type="project" value="InterPro"/>
</dbReference>
<dbReference type="CDD" id="cd18804">
    <property type="entry name" value="SF2_C_priA"/>
    <property type="match status" value="1"/>
</dbReference>
<dbReference type="Gene3D" id="3.40.50.300">
    <property type="entry name" value="P-loop containing nucleotide triphosphate hydrolases"/>
    <property type="match status" value="2"/>
</dbReference>
<dbReference type="Gene3D" id="3.40.1440.60">
    <property type="entry name" value="PriA, 3(prime) DNA-binding domain"/>
    <property type="match status" value="1"/>
</dbReference>
<dbReference type="HAMAP" id="MF_00983">
    <property type="entry name" value="PriA"/>
    <property type="match status" value="1"/>
</dbReference>
<dbReference type="InterPro" id="IPR006935">
    <property type="entry name" value="Helicase/UvrB_N"/>
</dbReference>
<dbReference type="InterPro" id="IPR014001">
    <property type="entry name" value="Helicase_ATP-bd"/>
</dbReference>
<dbReference type="InterPro" id="IPR001650">
    <property type="entry name" value="Helicase_C-like"/>
</dbReference>
<dbReference type="InterPro" id="IPR027417">
    <property type="entry name" value="P-loop_NTPase"/>
</dbReference>
<dbReference type="InterPro" id="IPR005259">
    <property type="entry name" value="PriA"/>
</dbReference>
<dbReference type="InterPro" id="IPR041222">
    <property type="entry name" value="PriA_3primeBD"/>
</dbReference>
<dbReference type="InterPro" id="IPR042115">
    <property type="entry name" value="PriA_3primeBD_sf"/>
</dbReference>
<dbReference type="InterPro" id="IPR041236">
    <property type="entry name" value="PriA_C"/>
</dbReference>
<dbReference type="InterPro" id="IPR040498">
    <property type="entry name" value="PriA_CRR"/>
</dbReference>
<dbReference type="InterPro" id="IPR050880">
    <property type="entry name" value="PriA_helicase"/>
</dbReference>
<dbReference type="NCBIfam" id="TIGR00595">
    <property type="entry name" value="priA"/>
    <property type="match status" value="1"/>
</dbReference>
<dbReference type="PANTHER" id="PTHR30580">
    <property type="entry name" value="PRIMOSOMAL PROTEIN N"/>
    <property type="match status" value="1"/>
</dbReference>
<dbReference type="PANTHER" id="PTHR30580:SF0">
    <property type="entry name" value="PRIMOSOMAL PROTEIN N"/>
    <property type="match status" value="1"/>
</dbReference>
<dbReference type="Pfam" id="PF00271">
    <property type="entry name" value="Helicase_C"/>
    <property type="match status" value="1"/>
</dbReference>
<dbReference type="Pfam" id="PF17764">
    <property type="entry name" value="PriA_3primeBD"/>
    <property type="match status" value="1"/>
</dbReference>
<dbReference type="Pfam" id="PF18074">
    <property type="entry name" value="PriA_C"/>
    <property type="match status" value="1"/>
</dbReference>
<dbReference type="Pfam" id="PF04851">
    <property type="entry name" value="ResIII"/>
    <property type="match status" value="1"/>
</dbReference>
<dbReference type="Pfam" id="PF18319">
    <property type="entry name" value="Zn_ribbon_PriA"/>
    <property type="match status" value="1"/>
</dbReference>
<dbReference type="SMART" id="SM00487">
    <property type="entry name" value="DEXDc"/>
    <property type="match status" value="1"/>
</dbReference>
<dbReference type="SMART" id="SM00490">
    <property type="entry name" value="HELICc"/>
    <property type="match status" value="1"/>
</dbReference>
<dbReference type="SUPFAM" id="SSF52540">
    <property type="entry name" value="P-loop containing nucleoside triphosphate hydrolases"/>
    <property type="match status" value="1"/>
</dbReference>
<dbReference type="PROSITE" id="PS51192">
    <property type="entry name" value="HELICASE_ATP_BIND_1"/>
    <property type="match status" value="1"/>
</dbReference>
<dbReference type="PROSITE" id="PS51194">
    <property type="entry name" value="HELICASE_CTER"/>
    <property type="match status" value="1"/>
</dbReference>